<reference key="1">
    <citation type="journal article" date="2004" name="Nature">
        <title>Genome evolution in yeasts.</title>
        <authorList>
            <person name="Dujon B."/>
            <person name="Sherman D."/>
            <person name="Fischer G."/>
            <person name="Durrens P."/>
            <person name="Casaregola S."/>
            <person name="Lafontaine I."/>
            <person name="de Montigny J."/>
            <person name="Marck C."/>
            <person name="Neuveglise C."/>
            <person name="Talla E."/>
            <person name="Goffard N."/>
            <person name="Frangeul L."/>
            <person name="Aigle M."/>
            <person name="Anthouard V."/>
            <person name="Babour A."/>
            <person name="Barbe V."/>
            <person name="Barnay S."/>
            <person name="Blanchin S."/>
            <person name="Beckerich J.-M."/>
            <person name="Beyne E."/>
            <person name="Bleykasten C."/>
            <person name="Boisrame A."/>
            <person name="Boyer J."/>
            <person name="Cattolico L."/>
            <person name="Confanioleri F."/>
            <person name="de Daruvar A."/>
            <person name="Despons L."/>
            <person name="Fabre E."/>
            <person name="Fairhead C."/>
            <person name="Ferry-Dumazet H."/>
            <person name="Groppi A."/>
            <person name="Hantraye F."/>
            <person name="Hennequin C."/>
            <person name="Jauniaux N."/>
            <person name="Joyet P."/>
            <person name="Kachouri R."/>
            <person name="Kerrest A."/>
            <person name="Koszul R."/>
            <person name="Lemaire M."/>
            <person name="Lesur I."/>
            <person name="Ma L."/>
            <person name="Muller H."/>
            <person name="Nicaud J.-M."/>
            <person name="Nikolski M."/>
            <person name="Oztas S."/>
            <person name="Ozier-Kalogeropoulos O."/>
            <person name="Pellenz S."/>
            <person name="Potier S."/>
            <person name="Richard G.-F."/>
            <person name="Straub M.-L."/>
            <person name="Suleau A."/>
            <person name="Swennen D."/>
            <person name="Tekaia F."/>
            <person name="Wesolowski-Louvel M."/>
            <person name="Westhof E."/>
            <person name="Wirth B."/>
            <person name="Zeniou-Meyer M."/>
            <person name="Zivanovic Y."/>
            <person name="Bolotin-Fukuhara M."/>
            <person name="Thierry A."/>
            <person name="Bouchier C."/>
            <person name="Caudron B."/>
            <person name="Scarpelli C."/>
            <person name="Gaillardin C."/>
            <person name="Weissenbach J."/>
            <person name="Wincker P."/>
            <person name="Souciet J.-L."/>
        </authorList>
    </citation>
    <scope>NUCLEOTIDE SEQUENCE [LARGE SCALE GENOMIC DNA]</scope>
    <source>
        <strain>CLIB 122 / E 150</strain>
    </source>
</reference>
<organism>
    <name type="scientific">Yarrowia lipolytica (strain CLIB 122 / E 150)</name>
    <name type="common">Yeast</name>
    <name type="synonym">Candida lipolytica</name>
    <dbReference type="NCBI Taxonomy" id="284591"/>
    <lineage>
        <taxon>Eukaryota</taxon>
        <taxon>Fungi</taxon>
        <taxon>Dikarya</taxon>
        <taxon>Ascomycota</taxon>
        <taxon>Saccharomycotina</taxon>
        <taxon>Dipodascomycetes</taxon>
        <taxon>Dipodascales</taxon>
        <taxon>Dipodascales incertae sedis</taxon>
        <taxon>Yarrowia</taxon>
    </lineage>
</organism>
<protein>
    <recommendedName>
        <fullName>Mediator of RNA polymerase II transcription subunit 5</fullName>
    </recommendedName>
    <alternativeName>
        <fullName>Mediator complex subunit 5</fullName>
    </alternativeName>
</protein>
<dbReference type="EMBL" id="CR382130">
    <property type="protein sequence ID" value="CAG81273.2"/>
    <property type="molecule type" value="Genomic_DNA"/>
</dbReference>
<dbReference type="RefSeq" id="XP_503081.2">
    <property type="nucleotide sequence ID" value="XM_503081.2"/>
</dbReference>
<dbReference type="STRING" id="284591.Q6C8D1"/>
<dbReference type="EnsemblFungi" id="CAG81273">
    <property type="protein sequence ID" value="CAG81273"/>
    <property type="gene ID" value="YALI0_D20636g"/>
</dbReference>
<dbReference type="KEGG" id="yli:2910334"/>
<dbReference type="VEuPathDB" id="FungiDB:YALI0_D20636g"/>
<dbReference type="HOGENOM" id="CLU_301519_0_0_1"/>
<dbReference type="InParanoid" id="Q6C8D1"/>
<dbReference type="OrthoDB" id="47735at4891"/>
<dbReference type="Proteomes" id="UP000001300">
    <property type="component" value="Chromosome D"/>
</dbReference>
<dbReference type="GO" id="GO:0016592">
    <property type="term" value="C:mediator complex"/>
    <property type="evidence" value="ECO:0000318"/>
    <property type="project" value="GO_Central"/>
</dbReference>
<dbReference type="GO" id="GO:0003712">
    <property type="term" value="F:transcription coregulator activity"/>
    <property type="evidence" value="ECO:0007669"/>
    <property type="project" value="InterPro"/>
</dbReference>
<dbReference type="GO" id="GO:0006357">
    <property type="term" value="P:regulation of transcription by RNA polymerase II"/>
    <property type="evidence" value="ECO:0000318"/>
    <property type="project" value="GO_Central"/>
</dbReference>
<dbReference type="InterPro" id="IPR014801">
    <property type="entry name" value="Mediator_Med5_fun"/>
</dbReference>
<dbReference type="PANTHER" id="PTHR35784">
    <property type="entry name" value="MEDIATOR OF RNA POLYMERASE II TRANSCRIPTION SUBUNIT 5"/>
    <property type="match status" value="1"/>
</dbReference>
<dbReference type="PANTHER" id="PTHR35784:SF1">
    <property type="entry name" value="MEDIATOR OF RNA POLYMERASE II TRANSCRIPTION SUBUNIT 5"/>
    <property type="match status" value="1"/>
</dbReference>
<dbReference type="Pfam" id="PF08689">
    <property type="entry name" value="Med5"/>
    <property type="match status" value="1"/>
</dbReference>
<accession>Q6C8D1</accession>
<keyword id="KW-0010">Activator</keyword>
<keyword id="KW-0539">Nucleus</keyword>
<keyword id="KW-1185">Reference proteome</keyword>
<keyword id="KW-0804">Transcription</keyword>
<keyword id="KW-0805">Transcription regulation</keyword>
<sequence>MDFNDKLATLTRVCLARRVSAGRFVKLTRHLMENEGASEVNPKALFGANTFDLLFFAYVHKLAFEDSLLPPYKLLAYLKVCAYGRLPQLLMYLGKQLQEMDTDVDLGANAGYSYLIQVLVSFMKDAFASGGGMRKRYGTSIAKGFGFFAEVLLTRLGDRMAGVTAPEITSQLAELAKVDATIAGRLGEAWMGLKGAAKTSTTAETVAATVATPTTLTRLYRDTLFESLMFGDSSWNQYGSLFQLISTVYAMPGYPTLASQPVQSRLAIIGEVICAMFDCQSITFLRRDSAKRNNYWKSCIRTRIPRIIRTLFPHSTPEEKTLIQSVVSKSVLGLDQPTVTLIRLSIGSDELDDMFSSFPGGLDVDIRHELVAACISEGVLPKDAFNAIFKDSGISVEALDYADELTIDGQAMSLDTMAEQLSYENLEIGSVSDCLMSKVVAQMEKLSGNAQEALTKRLLVCLADFVQAGNVRPVRYMCQALALNTTAVDIMALCVDPMLLLKALVDCIELWREEEDEANYQEAYTDFGAIVVFAITLKQRYHLDLALLNQFGTLFVGAPSPSSTMPSHELFLSQLLTESDSSQRIFHLSDEQNDQLSGWATALYDAGGISDDLMRSSSVKQFFLVTPAIFQQSMLAHEKGLLSLSTFKGGLEYFLQPFLLGSTVGVFKWLSEQLWVHSQKGHDEQMSTVISVCSTLILTDNTDIEVLSPIHQMVLAICADEMYEALDMALRAGYMVENRVFEFLEPFVSAINYNLNVQRTVSSSGFRSQKGIGMSGGGGSGTKEQTWKYGASMIATIKEQVSSLISWSQNQYTGPPFGYELVMILSSVDTLGHKYVLEQLIEEIALADSNGTGHYTVEVVATIATVAFIISTSVKSPRPFSDSQLILKSLDNMVNDSTGKSKDICVLLQSKILQLLTTAGYKPDGSRLDGKPHAKEDYSFVVNRTGEVENKPINDSSQNSNTDNQFMDTNMFGGDDFTMDFGGDIDMPDLF</sequence>
<evidence type="ECO:0000250" key="1"/>
<evidence type="ECO:0000305" key="2"/>
<feature type="chain" id="PRO_0000302786" description="Mediator of RNA polymerase II transcription subunit 5">
    <location>
        <begin position="1"/>
        <end position="991"/>
    </location>
</feature>
<proteinExistence type="inferred from homology"/>
<comment type="function">
    <text evidence="1">Component of the Mediator complex, a coactivator involved in the regulated transcription of nearly all RNA polymerase II-dependent genes. Mediator functions as a bridge to convey information from gene-specific regulatory proteins to the basal RNA polymerase II transcription machinery. Mediator is recruited to promoters by direct interactions with regulatory proteins and serves as a scaffold for the assembly of a functional preinitiation complex with RNA polymerase II and the general transcription factors (By similarity).</text>
</comment>
<comment type="subunit">
    <text evidence="1">Component of the Mediator complex.</text>
</comment>
<comment type="subcellular location">
    <subcellularLocation>
        <location evidence="1">Nucleus</location>
    </subcellularLocation>
</comment>
<comment type="similarity">
    <text evidence="2">Belongs to the Mediator complex subunit 5 family.</text>
</comment>
<gene>
    <name type="primary">NUT1</name>
    <name type="synonym">MED5</name>
    <name type="ordered locus">YALI0D20636g</name>
</gene>
<name>MED5_YARLI</name>